<name>MUTS_GEOUR</name>
<gene>
    <name evidence="1" type="primary">mutS</name>
    <name type="ordered locus">Gura_2386</name>
</gene>
<keyword id="KW-0067">ATP-binding</keyword>
<keyword id="KW-0227">DNA damage</keyword>
<keyword id="KW-0234">DNA repair</keyword>
<keyword id="KW-0238">DNA-binding</keyword>
<keyword id="KW-0547">Nucleotide-binding</keyword>
<keyword id="KW-1185">Reference proteome</keyword>
<proteinExistence type="inferred from homology"/>
<reference key="1">
    <citation type="submission" date="2007-05" db="EMBL/GenBank/DDBJ databases">
        <title>Complete sequence of Geobacter uraniireducens Rf4.</title>
        <authorList>
            <consortium name="US DOE Joint Genome Institute"/>
            <person name="Copeland A."/>
            <person name="Lucas S."/>
            <person name="Lapidus A."/>
            <person name="Barry K."/>
            <person name="Detter J.C."/>
            <person name="Glavina del Rio T."/>
            <person name="Hammon N."/>
            <person name="Israni S."/>
            <person name="Dalin E."/>
            <person name="Tice H."/>
            <person name="Pitluck S."/>
            <person name="Chertkov O."/>
            <person name="Brettin T."/>
            <person name="Bruce D."/>
            <person name="Han C."/>
            <person name="Schmutz J."/>
            <person name="Larimer F."/>
            <person name="Land M."/>
            <person name="Hauser L."/>
            <person name="Kyrpides N."/>
            <person name="Mikhailova N."/>
            <person name="Shelobolina E."/>
            <person name="Aklujkar M."/>
            <person name="Lovley D."/>
            <person name="Richardson P."/>
        </authorList>
    </citation>
    <scope>NUCLEOTIDE SEQUENCE [LARGE SCALE GENOMIC DNA]</scope>
    <source>
        <strain>ATCC BAA-1134 / JCM 13001 / Rf4</strain>
    </source>
</reference>
<dbReference type="EMBL" id="CP000698">
    <property type="protein sequence ID" value="ABQ26565.1"/>
    <property type="molecule type" value="Genomic_DNA"/>
</dbReference>
<dbReference type="RefSeq" id="WP_011939257.1">
    <property type="nucleotide sequence ID" value="NC_009483.1"/>
</dbReference>
<dbReference type="SMR" id="A5G447"/>
<dbReference type="STRING" id="351605.Gura_2386"/>
<dbReference type="KEGG" id="gur:Gura_2386"/>
<dbReference type="HOGENOM" id="CLU_002472_3_1_7"/>
<dbReference type="OrthoDB" id="9802448at2"/>
<dbReference type="Proteomes" id="UP000006695">
    <property type="component" value="Chromosome"/>
</dbReference>
<dbReference type="GO" id="GO:0005829">
    <property type="term" value="C:cytosol"/>
    <property type="evidence" value="ECO:0007669"/>
    <property type="project" value="TreeGrafter"/>
</dbReference>
<dbReference type="GO" id="GO:0005524">
    <property type="term" value="F:ATP binding"/>
    <property type="evidence" value="ECO:0007669"/>
    <property type="project" value="UniProtKB-UniRule"/>
</dbReference>
<dbReference type="GO" id="GO:0140664">
    <property type="term" value="F:ATP-dependent DNA damage sensor activity"/>
    <property type="evidence" value="ECO:0007669"/>
    <property type="project" value="InterPro"/>
</dbReference>
<dbReference type="GO" id="GO:0003684">
    <property type="term" value="F:damaged DNA binding"/>
    <property type="evidence" value="ECO:0007669"/>
    <property type="project" value="UniProtKB-UniRule"/>
</dbReference>
<dbReference type="GO" id="GO:0030983">
    <property type="term" value="F:mismatched DNA binding"/>
    <property type="evidence" value="ECO:0007669"/>
    <property type="project" value="InterPro"/>
</dbReference>
<dbReference type="GO" id="GO:0006298">
    <property type="term" value="P:mismatch repair"/>
    <property type="evidence" value="ECO:0007669"/>
    <property type="project" value="UniProtKB-UniRule"/>
</dbReference>
<dbReference type="CDD" id="cd03284">
    <property type="entry name" value="ABC_MutS1"/>
    <property type="match status" value="1"/>
</dbReference>
<dbReference type="FunFam" id="1.10.1420.10:FF:000001">
    <property type="entry name" value="DNA mismatch repair protein MutS"/>
    <property type="match status" value="1"/>
</dbReference>
<dbReference type="FunFam" id="3.40.1170.10:FF:000001">
    <property type="entry name" value="DNA mismatch repair protein MutS"/>
    <property type="match status" value="1"/>
</dbReference>
<dbReference type="FunFam" id="3.40.50.300:FF:000870">
    <property type="entry name" value="MutS protein homolog 4"/>
    <property type="match status" value="1"/>
</dbReference>
<dbReference type="Gene3D" id="1.10.1420.10">
    <property type="match status" value="2"/>
</dbReference>
<dbReference type="Gene3D" id="3.40.1170.10">
    <property type="entry name" value="DNA repair protein MutS, domain I"/>
    <property type="match status" value="1"/>
</dbReference>
<dbReference type="Gene3D" id="3.30.420.110">
    <property type="entry name" value="MutS, connector domain"/>
    <property type="match status" value="1"/>
</dbReference>
<dbReference type="Gene3D" id="3.40.50.300">
    <property type="entry name" value="P-loop containing nucleotide triphosphate hydrolases"/>
    <property type="match status" value="1"/>
</dbReference>
<dbReference type="HAMAP" id="MF_00096">
    <property type="entry name" value="MutS"/>
    <property type="match status" value="1"/>
</dbReference>
<dbReference type="InterPro" id="IPR005748">
    <property type="entry name" value="DNA_mismatch_repair_MutS"/>
</dbReference>
<dbReference type="InterPro" id="IPR007695">
    <property type="entry name" value="DNA_mismatch_repair_MutS-lik_N"/>
</dbReference>
<dbReference type="InterPro" id="IPR017261">
    <property type="entry name" value="DNA_mismatch_repair_MutS/MSH"/>
</dbReference>
<dbReference type="InterPro" id="IPR000432">
    <property type="entry name" value="DNA_mismatch_repair_MutS_C"/>
</dbReference>
<dbReference type="InterPro" id="IPR007861">
    <property type="entry name" value="DNA_mismatch_repair_MutS_clamp"/>
</dbReference>
<dbReference type="InterPro" id="IPR007696">
    <property type="entry name" value="DNA_mismatch_repair_MutS_core"/>
</dbReference>
<dbReference type="InterPro" id="IPR016151">
    <property type="entry name" value="DNA_mismatch_repair_MutS_N"/>
</dbReference>
<dbReference type="InterPro" id="IPR036187">
    <property type="entry name" value="DNA_mismatch_repair_MutS_sf"/>
</dbReference>
<dbReference type="InterPro" id="IPR007860">
    <property type="entry name" value="DNA_mmatch_repair_MutS_con_dom"/>
</dbReference>
<dbReference type="InterPro" id="IPR045076">
    <property type="entry name" value="MutS"/>
</dbReference>
<dbReference type="InterPro" id="IPR036678">
    <property type="entry name" value="MutS_con_dom_sf"/>
</dbReference>
<dbReference type="InterPro" id="IPR027417">
    <property type="entry name" value="P-loop_NTPase"/>
</dbReference>
<dbReference type="NCBIfam" id="TIGR01070">
    <property type="entry name" value="mutS1"/>
    <property type="match status" value="1"/>
</dbReference>
<dbReference type="NCBIfam" id="NF003810">
    <property type="entry name" value="PRK05399.1"/>
    <property type="match status" value="1"/>
</dbReference>
<dbReference type="PANTHER" id="PTHR11361:SF34">
    <property type="entry name" value="DNA MISMATCH REPAIR PROTEIN MSH1, MITOCHONDRIAL"/>
    <property type="match status" value="1"/>
</dbReference>
<dbReference type="PANTHER" id="PTHR11361">
    <property type="entry name" value="DNA MISMATCH REPAIR PROTEIN MUTS FAMILY MEMBER"/>
    <property type="match status" value="1"/>
</dbReference>
<dbReference type="Pfam" id="PF01624">
    <property type="entry name" value="MutS_I"/>
    <property type="match status" value="1"/>
</dbReference>
<dbReference type="Pfam" id="PF05188">
    <property type="entry name" value="MutS_II"/>
    <property type="match status" value="1"/>
</dbReference>
<dbReference type="Pfam" id="PF05192">
    <property type="entry name" value="MutS_III"/>
    <property type="match status" value="1"/>
</dbReference>
<dbReference type="Pfam" id="PF05190">
    <property type="entry name" value="MutS_IV"/>
    <property type="match status" value="1"/>
</dbReference>
<dbReference type="Pfam" id="PF00488">
    <property type="entry name" value="MutS_V"/>
    <property type="match status" value="1"/>
</dbReference>
<dbReference type="PIRSF" id="PIRSF037677">
    <property type="entry name" value="DNA_mis_repair_Msh6"/>
    <property type="match status" value="1"/>
</dbReference>
<dbReference type="SMART" id="SM00534">
    <property type="entry name" value="MUTSac"/>
    <property type="match status" value="1"/>
</dbReference>
<dbReference type="SMART" id="SM00533">
    <property type="entry name" value="MUTSd"/>
    <property type="match status" value="1"/>
</dbReference>
<dbReference type="SUPFAM" id="SSF55271">
    <property type="entry name" value="DNA repair protein MutS, domain I"/>
    <property type="match status" value="1"/>
</dbReference>
<dbReference type="SUPFAM" id="SSF53150">
    <property type="entry name" value="DNA repair protein MutS, domain II"/>
    <property type="match status" value="1"/>
</dbReference>
<dbReference type="SUPFAM" id="SSF48334">
    <property type="entry name" value="DNA repair protein MutS, domain III"/>
    <property type="match status" value="1"/>
</dbReference>
<dbReference type="SUPFAM" id="SSF52540">
    <property type="entry name" value="P-loop containing nucleoside triphosphate hydrolases"/>
    <property type="match status" value="1"/>
</dbReference>
<dbReference type="PROSITE" id="PS00486">
    <property type="entry name" value="DNA_MISMATCH_REPAIR_2"/>
    <property type="match status" value="1"/>
</dbReference>
<protein>
    <recommendedName>
        <fullName evidence="1">DNA mismatch repair protein MutS</fullName>
    </recommendedName>
</protein>
<evidence type="ECO:0000255" key="1">
    <source>
        <dbReference type="HAMAP-Rule" id="MF_00096"/>
    </source>
</evidence>
<comment type="function">
    <text evidence="1">This protein is involved in the repair of mismatches in DNA. It is possible that it carries out the mismatch recognition step. This protein has a weak ATPase activity.</text>
</comment>
<comment type="similarity">
    <text evidence="1">Belongs to the DNA mismatch repair MutS family.</text>
</comment>
<organism>
    <name type="scientific">Geotalea uraniireducens (strain Rf4)</name>
    <name type="common">Geobacter uraniireducens</name>
    <dbReference type="NCBI Taxonomy" id="351605"/>
    <lineage>
        <taxon>Bacteria</taxon>
        <taxon>Pseudomonadati</taxon>
        <taxon>Thermodesulfobacteriota</taxon>
        <taxon>Desulfuromonadia</taxon>
        <taxon>Geobacterales</taxon>
        <taxon>Geobacteraceae</taxon>
        <taxon>Geotalea</taxon>
    </lineage>
</organism>
<feature type="chain" id="PRO_0000335161" description="DNA mismatch repair protein MutS">
    <location>
        <begin position="1"/>
        <end position="872"/>
    </location>
</feature>
<feature type="binding site" evidence="1">
    <location>
        <begin position="622"/>
        <end position="629"/>
    </location>
    <ligand>
        <name>ATP</name>
        <dbReference type="ChEBI" id="CHEBI:30616"/>
    </ligand>
</feature>
<sequence length="872" mass="96488">MSQLTPMMRQYLEIKAGYPDAILFFRLGDFYEMFLDDAVKASRILDITLTSRNKNSDGADVPLCGIPYHSATPYIAKLIEAGEKVAICEQVEDPKSVKGIVRREVVKVITPGLVVDSSNLSPKENNYLLSLYCDDATTWGLSYLDLSTGEFRVTELDGFDAAVAEVACVKPREIILPAVFRENGRMKELMPVTAGLATTFVDDWVYDLDYCKRLIGSHFGGASPSALGCDGLNTGLYAICAVLHYLQETQKGRAGHVNSIIPYTNREYLVLDESTRRNLELTATLAEGKRKGSLLGLMDRTTTAMGGRKMKQWINYPLVTIQSITERQDAIEEFVQDPSRRTALVFLLNGVYDLERLNGRISLASAGAKDLVAMKESLARIPGIKELLASSSSVLLRRLNEGLNPLPDLVGLIAGGIVENPPFVLRDGGIIADGYNAELDELRAISREGKGFIARLEAQEKGRTGINSLKIRYNKVFGYYIEVTKTNLTSIPADYIRKQTLANAERYITPELKEYEDKVLGAEDRIRELEFSLFQEIRETVTGHGEIVARTADCLATLDVLASLAELAHERNYCRPLVDDGTTLFISEGRHPVIEAMHQGERFVPNDTLLDNGENQLIIITGPNMAGKSTFMRQVALITLMAQMGSFVPATEAHISLVDRIFTRVGASDNLARGQSTFMVEMMESANILRHATPKSLVILDEIGRGTSTFDGVSIAWAVAEFLHDNDKHAAKTLFATHYHELTELAVTRKRIKNFNIAVKEWNEQIIFLRKIVSGGASHSYGIQVARLAGLPLEVIERAKEILQNLEKGEFAEEGIPRIARGKKSAGSAPASQLSLFDSGEDMLRKRLKGMDVTTLTPLEALNLLDELKRMV</sequence>
<accession>A5G447</accession>